<feature type="chain" id="PRO_0000382037" description="Prephenate dehydratase">
    <location>
        <begin position="1"/>
        <end position="315"/>
    </location>
</feature>
<feature type="domain" description="Prephenate dehydratase" evidence="2">
    <location>
        <begin position="3"/>
        <end position="189"/>
    </location>
</feature>
<feature type="domain" description="ACT" evidence="3">
    <location>
        <begin position="203"/>
        <end position="280"/>
    </location>
</feature>
<feature type="site" description="Essential for activity" evidence="1">
    <location>
        <position position="182"/>
    </location>
</feature>
<reference key="1">
    <citation type="journal article" date="2008" name="Genome Res.">
        <title>Insights from the complete genome sequence of Mycobacterium marinum on the evolution of Mycobacterium tuberculosis.</title>
        <authorList>
            <person name="Stinear T.P."/>
            <person name="Seemann T."/>
            <person name="Harrison P.F."/>
            <person name="Jenkin G.A."/>
            <person name="Davies J.K."/>
            <person name="Johnson P.D."/>
            <person name="Abdellah Z."/>
            <person name="Arrowsmith C."/>
            <person name="Chillingworth T."/>
            <person name="Churcher C."/>
            <person name="Clarke K."/>
            <person name="Cronin A."/>
            <person name="Davis P."/>
            <person name="Goodhead I."/>
            <person name="Holroyd N."/>
            <person name="Jagels K."/>
            <person name="Lord A."/>
            <person name="Moule S."/>
            <person name="Mungall K."/>
            <person name="Norbertczak H."/>
            <person name="Quail M.A."/>
            <person name="Rabbinowitsch E."/>
            <person name="Walker D."/>
            <person name="White B."/>
            <person name="Whitehead S."/>
            <person name="Small P.L."/>
            <person name="Brosch R."/>
            <person name="Ramakrishnan L."/>
            <person name="Fischbach M.A."/>
            <person name="Parkhill J."/>
            <person name="Cole S.T."/>
        </authorList>
    </citation>
    <scope>NUCLEOTIDE SEQUENCE [LARGE SCALE GENOMIC DNA]</scope>
    <source>
        <strain>ATCC BAA-535 / M</strain>
    </source>
</reference>
<organism>
    <name type="scientific">Mycobacterium marinum (strain ATCC BAA-535 / M)</name>
    <dbReference type="NCBI Taxonomy" id="216594"/>
    <lineage>
        <taxon>Bacteria</taxon>
        <taxon>Bacillati</taxon>
        <taxon>Actinomycetota</taxon>
        <taxon>Actinomycetes</taxon>
        <taxon>Mycobacteriales</taxon>
        <taxon>Mycobacteriaceae</taxon>
        <taxon>Mycobacterium</taxon>
        <taxon>Mycobacterium ulcerans group</taxon>
    </lineage>
</organism>
<comment type="catalytic activity">
    <reaction>
        <text>prephenate + H(+) = 3-phenylpyruvate + CO2 + H2O</text>
        <dbReference type="Rhea" id="RHEA:21648"/>
        <dbReference type="ChEBI" id="CHEBI:15377"/>
        <dbReference type="ChEBI" id="CHEBI:15378"/>
        <dbReference type="ChEBI" id="CHEBI:16526"/>
        <dbReference type="ChEBI" id="CHEBI:18005"/>
        <dbReference type="ChEBI" id="CHEBI:29934"/>
        <dbReference type="EC" id="4.2.1.51"/>
    </reaction>
</comment>
<comment type="pathway">
    <text>Amino-acid biosynthesis; L-phenylalanine biosynthesis; phenylpyruvate from prephenate: step 1/1.</text>
</comment>
<comment type="subunit">
    <text evidence="1">Homodimer.</text>
</comment>
<evidence type="ECO:0000250" key="1"/>
<evidence type="ECO:0000255" key="2">
    <source>
        <dbReference type="PROSITE-ProRule" id="PRU00517"/>
    </source>
</evidence>
<evidence type="ECO:0000255" key="3">
    <source>
        <dbReference type="PROSITE-ProRule" id="PRU01007"/>
    </source>
</evidence>
<dbReference type="EC" id="4.2.1.51"/>
<dbReference type="EMBL" id="CP000854">
    <property type="protein sequence ID" value="ACC43794.1"/>
    <property type="molecule type" value="Genomic_DNA"/>
</dbReference>
<dbReference type="RefSeq" id="WP_012396890.1">
    <property type="nucleotide sequence ID" value="NC_010612.1"/>
</dbReference>
<dbReference type="SMR" id="B2HMM5"/>
<dbReference type="STRING" id="216594.MMAR_5390"/>
<dbReference type="KEGG" id="mmi:MMAR_5390"/>
<dbReference type="eggNOG" id="COG0077">
    <property type="taxonomic scope" value="Bacteria"/>
</dbReference>
<dbReference type="HOGENOM" id="CLU_035008_0_0_11"/>
<dbReference type="OrthoDB" id="9802281at2"/>
<dbReference type="UniPathway" id="UPA00121">
    <property type="reaction ID" value="UER00345"/>
</dbReference>
<dbReference type="Proteomes" id="UP000001190">
    <property type="component" value="Chromosome"/>
</dbReference>
<dbReference type="GO" id="GO:0005737">
    <property type="term" value="C:cytoplasm"/>
    <property type="evidence" value="ECO:0007669"/>
    <property type="project" value="TreeGrafter"/>
</dbReference>
<dbReference type="GO" id="GO:0004664">
    <property type="term" value="F:prephenate dehydratase activity"/>
    <property type="evidence" value="ECO:0007669"/>
    <property type="project" value="UniProtKB-EC"/>
</dbReference>
<dbReference type="GO" id="GO:0042803">
    <property type="term" value="F:protein homodimerization activity"/>
    <property type="evidence" value="ECO:0000250"/>
    <property type="project" value="UniProtKB"/>
</dbReference>
<dbReference type="GO" id="GO:0009094">
    <property type="term" value="P:L-phenylalanine biosynthetic process"/>
    <property type="evidence" value="ECO:0007669"/>
    <property type="project" value="UniProtKB-UniPathway"/>
</dbReference>
<dbReference type="CDD" id="cd04905">
    <property type="entry name" value="ACT_CM-PDT"/>
    <property type="match status" value="1"/>
</dbReference>
<dbReference type="CDD" id="cd13632">
    <property type="entry name" value="PBP2_Aa-PDT_like"/>
    <property type="match status" value="1"/>
</dbReference>
<dbReference type="FunFam" id="3.30.70.260:FF:000012">
    <property type="entry name" value="Prephenate dehydratase"/>
    <property type="match status" value="1"/>
</dbReference>
<dbReference type="FunFam" id="3.40.190.10:FF:000064">
    <property type="entry name" value="Prephenate dehydratase"/>
    <property type="match status" value="1"/>
</dbReference>
<dbReference type="FunFam" id="3.40.190.10:FF:000146">
    <property type="entry name" value="Prephenate dehydratase"/>
    <property type="match status" value="1"/>
</dbReference>
<dbReference type="Gene3D" id="3.30.70.260">
    <property type="match status" value="1"/>
</dbReference>
<dbReference type="Gene3D" id="3.40.190.10">
    <property type="entry name" value="Periplasmic binding protein-like II"/>
    <property type="match status" value="2"/>
</dbReference>
<dbReference type="InterPro" id="IPR045865">
    <property type="entry name" value="ACT-like_dom_sf"/>
</dbReference>
<dbReference type="InterPro" id="IPR002912">
    <property type="entry name" value="ACT_dom"/>
</dbReference>
<dbReference type="InterPro" id="IPR008242">
    <property type="entry name" value="Chor_mutase/pphenate_deHydtase"/>
</dbReference>
<dbReference type="InterPro" id="IPR001086">
    <property type="entry name" value="Preph_deHydtase"/>
</dbReference>
<dbReference type="InterPro" id="IPR018528">
    <property type="entry name" value="Preph_deHydtase_CS"/>
</dbReference>
<dbReference type="NCBIfam" id="NF008865">
    <property type="entry name" value="PRK11898.1"/>
    <property type="match status" value="1"/>
</dbReference>
<dbReference type="PANTHER" id="PTHR21022">
    <property type="entry name" value="PREPHENATE DEHYDRATASE P PROTEIN"/>
    <property type="match status" value="1"/>
</dbReference>
<dbReference type="PANTHER" id="PTHR21022:SF19">
    <property type="entry name" value="PREPHENATE DEHYDRATASE-RELATED"/>
    <property type="match status" value="1"/>
</dbReference>
<dbReference type="Pfam" id="PF01842">
    <property type="entry name" value="ACT"/>
    <property type="match status" value="1"/>
</dbReference>
<dbReference type="Pfam" id="PF00800">
    <property type="entry name" value="PDT"/>
    <property type="match status" value="1"/>
</dbReference>
<dbReference type="PIRSF" id="PIRSF001500">
    <property type="entry name" value="Chor_mut_pdt_Ppr"/>
    <property type="match status" value="1"/>
</dbReference>
<dbReference type="SUPFAM" id="SSF55021">
    <property type="entry name" value="ACT-like"/>
    <property type="match status" value="1"/>
</dbReference>
<dbReference type="SUPFAM" id="SSF53850">
    <property type="entry name" value="Periplasmic binding protein-like II"/>
    <property type="match status" value="1"/>
</dbReference>
<dbReference type="PROSITE" id="PS51671">
    <property type="entry name" value="ACT"/>
    <property type="match status" value="1"/>
</dbReference>
<dbReference type="PROSITE" id="PS00858">
    <property type="entry name" value="PREPHENATE_DEHYDR_2"/>
    <property type="match status" value="1"/>
</dbReference>
<dbReference type="PROSITE" id="PS51171">
    <property type="entry name" value="PREPHENATE_DEHYDR_3"/>
    <property type="match status" value="1"/>
</dbReference>
<sequence length="315" mass="32783">MARIAYLGPEGTFTQAALLEIAAAGLVPGHDDGGAQPLPVESTPAALDAVRTGAAEFACVPIENSIDGSLAPTLDSLAIGSPLQVFAETTLDVAFSIVVRPGVGAADVRTLAAFPVAAAQVRQWLTAHLPSVELHPAYSNADAARQVAEGQVDAAVTSPLAAAHWALQSLADGVVDESNARTRFLLIGVPGPPPPRTGTDRTSVVLRIANVPGALLDALTEFGMRGIDLTRIESRPTRTGLGTYMFFVDCVGHIADDAVAEALKALHRRCADVRYLGSWPTGQTYAGQPPPADEAAIWLQQLREGKPEASPGPPL</sequence>
<keyword id="KW-0028">Amino-acid biosynthesis</keyword>
<keyword id="KW-0057">Aromatic amino acid biosynthesis</keyword>
<keyword id="KW-0456">Lyase</keyword>
<keyword id="KW-0584">Phenylalanine biosynthesis</keyword>
<keyword id="KW-1185">Reference proteome</keyword>
<proteinExistence type="inferred from homology"/>
<name>PHEA_MYCMM</name>
<accession>B2HMM5</accession>
<gene>
    <name type="primary">pheA</name>
    <name type="ordered locus">MMAR_5390</name>
</gene>
<protein>
    <recommendedName>
        <fullName>Prephenate dehydratase</fullName>
        <shortName>PDT</shortName>
        <ecNumber>4.2.1.51</ecNumber>
    </recommendedName>
</protein>